<feature type="transit peptide" description="Chloroplast" evidence="4">
    <location>
        <begin position="1"/>
        <end position="77"/>
    </location>
</feature>
<feature type="chain" id="PRO_0000416139" description="Trigger factor-like protein TIG, Chloroplastic">
    <location>
        <begin position="78"/>
        <end position="547"/>
    </location>
</feature>
<feature type="domain" description="PPIase FKBP-type" evidence="2">
    <location>
        <begin position="271"/>
        <end position="366"/>
    </location>
</feature>
<feature type="modified residue" description="N-acetylalanine" evidence="4">
    <location>
        <position position="78"/>
    </location>
</feature>
<feature type="sequence conflict" description="In Ref. 4; BAD95133." evidence="3" ref="4">
    <original>Q</original>
    <variation>K</variation>
    <location>
        <position position="410"/>
    </location>
</feature>
<feature type="sequence conflict" description="In Ref. 4; BAD95133." evidence="3" ref="4">
    <original>N</original>
    <variation>K</variation>
    <location>
        <position position="446"/>
    </location>
</feature>
<reference key="1">
    <citation type="journal article" date="1998" name="DNA Res.">
        <title>Structural analysis of Arabidopsis thaliana chromosome 5. IV. Sequence features of the regions of 1,456,315 bp covered by nineteen physically assigned P1 and TAC clones.</title>
        <authorList>
            <person name="Sato S."/>
            <person name="Kaneko T."/>
            <person name="Kotani H."/>
            <person name="Nakamura Y."/>
            <person name="Asamizu E."/>
            <person name="Miyajima N."/>
            <person name="Tabata S."/>
        </authorList>
    </citation>
    <scope>NUCLEOTIDE SEQUENCE [LARGE SCALE GENOMIC DNA]</scope>
    <source>
        <strain>cv. Columbia</strain>
    </source>
</reference>
<reference key="2">
    <citation type="journal article" date="2017" name="Plant J.">
        <title>Araport11: a complete reannotation of the Arabidopsis thaliana reference genome.</title>
        <authorList>
            <person name="Cheng C.Y."/>
            <person name="Krishnakumar V."/>
            <person name="Chan A.P."/>
            <person name="Thibaud-Nissen F."/>
            <person name="Schobel S."/>
            <person name="Town C.D."/>
        </authorList>
    </citation>
    <scope>GENOME REANNOTATION</scope>
    <source>
        <strain>cv. Columbia</strain>
    </source>
</reference>
<reference key="3">
    <citation type="journal article" date="2003" name="Science">
        <title>Empirical analysis of transcriptional activity in the Arabidopsis genome.</title>
        <authorList>
            <person name="Yamada K."/>
            <person name="Lim J."/>
            <person name="Dale J.M."/>
            <person name="Chen H."/>
            <person name="Shinn P."/>
            <person name="Palm C.J."/>
            <person name="Southwick A.M."/>
            <person name="Wu H.C."/>
            <person name="Kim C.J."/>
            <person name="Nguyen M."/>
            <person name="Pham P.K."/>
            <person name="Cheuk R.F."/>
            <person name="Karlin-Newmann G."/>
            <person name="Liu S.X."/>
            <person name="Lam B."/>
            <person name="Sakano H."/>
            <person name="Wu T."/>
            <person name="Yu G."/>
            <person name="Miranda M."/>
            <person name="Quach H.L."/>
            <person name="Tripp M."/>
            <person name="Chang C.H."/>
            <person name="Lee J.M."/>
            <person name="Toriumi M.J."/>
            <person name="Chan M.M."/>
            <person name="Tang C.C."/>
            <person name="Onodera C.S."/>
            <person name="Deng J.M."/>
            <person name="Akiyama K."/>
            <person name="Ansari Y."/>
            <person name="Arakawa T."/>
            <person name="Banh J."/>
            <person name="Banno F."/>
            <person name="Bowser L."/>
            <person name="Brooks S.Y."/>
            <person name="Carninci P."/>
            <person name="Chao Q."/>
            <person name="Choy N."/>
            <person name="Enju A."/>
            <person name="Goldsmith A.D."/>
            <person name="Gurjal M."/>
            <person name="Hansen N.F."/>
            <person name="Hayashizaki Y."/>
            <person name="Johnson-Hopson C."/>
            <person name="Hsuan V.W."/>
            <person name="Iida K."/>
            <person name="Karnes M."/>
            <person name="Khan S."/>
            <person name="Koesema E."/>
            <person name="Ishida J."/>
            <person name="Jiang P.X."/>
            <person name="Jones T."/>
            <person name="Kawai J."/>
            <person name="Kamiya A."/>
            <person name="Meyers C."/>
            <person name="Nakajima M."/>
            <person name="Narusaka M."/>
            <person name="Seki M."/>
            <person name="Sakurai T."/>
            <person name="Satou M."/>
            <person name="Tamse R."/>
            <person name="Vaysberg M."/>
            <person name="Wallender E.K."/>
            <person name="Wong C."/>
            <person name="Yamamura Y."/>
            <person name="Yuan S."/>
            <person name="Shinozaki K."/>
            <person name="Davis R.W."/>
            <person name="Theologis A."/>
            <person name="Ecker J.R."/>
        </authorList>
    </citation>
    <scope>NUCLEOTIDE SEQUENCE [LARGE SCALE MRNA]</scope>
    <source>
        <strain>cv. Columbia</strain>
    </source>
</reference>
<reference key="4">
    <citation type="submission" date="2005-03" db="EMBL/GenBank/DDBJ databases">
        <title>Large-scale analysis of RIKEN Arabidopsis full-length (RAFL) cDNAs.</title>
        <authorList>
            <person name="Totoki Y."/>
            <person name="Seki M."/>
            <person name="Ishida J."/>
            <person name="Nakajima M."/>
            <person name="Enju A."/>
            <person name="Kamiya A."/>
            <person name="Narusaka M."/>
            <person name="Shin-i T."/>
            <person name="Nakagawa M."/>
            <person name="Sakamoto N."/>
            <person name="Oishi K."/>
            <person name="Kohara Y."/>
            <person name="Kobayashi M."/>
            <person name="Toyoda A."/>
            <person name="Sakaki Y."/>
            <person name="Sakurai T."/>
            <person name="Iida K."/>
            <person name="Akiyama K."/>
            <person name="Satou M."/>
            <person name="Toyoda T."/>
            <person name="Konagaya A."/>
            <person name="Carninci P."/>
            <person name="Kawai J."/>
            <person name="Hayashizaki Y."/>
            <person name="Shinozaki K."/>
        </authorList>
    </citation>
    <scope>NUCLEOTIDE SEQUENCE [LARGE SCALE MRNA] OF 222-547</scope>
    <source>
        <strain>cv. Columbia</strain>
    </source>
</reference>
<reference key="5">
    <citation type="journal article" date="2004" name="Plant Physiol.">
        <title>Immunophilins and parvulins. Superfamily of peptidyl prolyl isomerases in Arabidopsis.</title>
        <authorList>
            <person name="He Z."/>
            <person name="Li L."/>
            <person name="Luan S."/>
        </authorList>
    </citation>
    <scope>GENE FAMILY</scope>
    <scope>NOMENCLATURE</scope>
</reference>
<reference key="6">
    <citation type="journal article" date="2012" name="Mol. Cell. Proteomics">
        <title>Comparative large-scale characterisation of plant vs. mammal proteins reveals similar and idiosyncratic N-alpha acetylation features.</title>
        <authorList>
            <person name="Bienvenut W.V."/>
            <person name="Sumpton D."/>
            <person name="Martinez A."/>
            <person name="Lilla S."/>
            <person name="Espagne C."/>
            <person name="Meinnel T."/>
            <person name="Giglione C."/>
        </authorList>
    </citation>
    <scope>ACETYLATION [LARGE SCALE ANALYSIS] AT ALA-78</scope>
    <scope>CLEAVAGE OF TRANSIT PEPTIDE [LARGE SCALE ANALYSIS] AFTER ALA-77</scope>
    <scope>IDENTIFICATION BY MASS SPECTROMETRY [LARGE SCALE ANALYSIS]</scope>
</reference>
<gene>
    <name type="primary">TIG</name>
    <name type="ordered locus">At5g55220</name>
    <name type="ORF">MCO15_17</name>
</gene>
<accession>Q8S9L5</accession>
<accession>Q56WB5</accession>
<accession>Q9FLP1</accession>
<evidence type="ECO:0000250" key="1"/>
<evidence type="ECO:0000255" key="2">
    <source>
        <dbReference type="PROSITE-ProRule" id="PRU00277"/>
    </source>
</evidence>
<evidence type="ECO:0000305" key="3"/>
<evidence type="ECO:0007744" key="4">
    <source>
    </source>
</evidence>
<organism>
    <name type="scientific">Arabidopsis thaliana</name>
    <name type="common">Mouse-ear cress</name>
    <dbReference type="NCBI Taxonomy" id="3702"/>
    <lineage>
        <taxon>Eukaryota</taxon>
        <taxon>Viridiplantae</taxon>
        <taxon>Streptophyta</taxon>
        <taxon>Embryophyta</taxon>
        <taxon>Tracheophyta</taxon>
        <taxon>Spermatophyta</taxon>
        <taxon>Magnoliopsida</taxon>
        <taxon>eudicotyledons</taxon>
        <taxon>Gunneridae</taxon>
        <taxon>Pentapetalae</taxon>
        <taxon>rosids</taxon>
        <taxon>malvids</taxon>
        <taxon>Brassicales</taxon>
        <taxon>Brassicaceae</taxon>
        <taxon>Camelineae</taxon>
        <taxon>Arabidopsis</taxon>
    </lineage>
</organism>
<protein>
    <recommendedName>
        <fullName>Trigger factor-like protein TIG, Chloroplastic</fullName>
        <ecNumber>5.2.1.8</ecNumber>
    </recommendedName>
    <alternativeName>
        <fullName>Immunophilin TIG</fullName>
    </alternativeName>
    <alternativeName>
        <fullName>Peptidyl-prolyl cis-trans isomerase TIG</fullName>
        <shortName>PPIase TIG</shortName>
    </alternativeName>
    <alternativeName>
        <fullName>Rotamase</fullName>
    </alternativeName>
</protein>
<name>TIG_ARATH</name>
<proteinExistence type="evidence at protein level"/>
<sequence>MELCVISTTTTVKAINPFLPSITRRVSSRLFQSDSVLQFGGRLKKPISRPLDMSCVSRKIGFFGDFMSHGGNFRLFAAASPAVETSVKEDKLPADLKVTETVQANSSVKLSVEVPEIVCEDCYQRVLTEFMKLSKVPGFRPKTRVPENIIVGFVGRQYVLRATVESILKRTLPHAMESVTGRALKDSIQIVSSFPDMEKAYSKLKTLSYEVVVDVVPELKWNPEDGYKNMKVVVELGDEIDAKKACERQLRQKYKSLGALKIVTERGLQVGDLAVVDISATTIDEDGSTGQAIPDAESKGFHFDTEEGNRLLPGFLDAIIGIRAGESKSFTLVFPESWKQESLRGQRAQFTVDCKELFYRDLPTLDDSLADKLLPGCTTLKEVEETLAKRCQEMEQEAKEQATDNAILEQIRKMVEVEIPQSLFEEQGRQFYGARLLEIQGNMKLNEDQLASLSSQKAVNEFLETQRESITNIIKQNIAVGDIFKRENLEFSTDELVKEVENSISEFKKHKQEFDEERVKDQVQEILEGAKVLEWLKDRAEIQYITR</sequence>
<keyword id="KW-0007">Acetylation</keyword>
<keyword id="KW-0143">Chaperone</keyword>
<keyword id="KW-0150">Chloroplast</keyword>
<keyword id="KW-0413">Isomerase</keyword>
<keyword id="KW-0934">Plastid</keyword>
<keyword id="KW-1185">Reference proteome</keyword>
<keyword id="KW-0697">Rotamase</keyword>
<keyword id="KW-0809">Transit peptide</keyword>
<dbReference type="EC" id="5.2.1.8"/>
<dbReference type="EMBL" id="AB010071">
    <property type="protein sequence ID" value="BAB08591.1"/>
    <property type="status" value="ALT_SEQ"/>
    <property type="molecule type" value="Genomic_DNA"/>
</dbReference>
<dbReference type="EMBL" id="CP002688">
    <property type="protein sequence ID" value="AED96601.1"/>
    <property type="molecule type" value="Genomic_DNA"/>
</dbReference>
<dbReference type="EMBL" id="AY074845">
    <property type="protein sequence ID" value="AAL75898.1"/>
    <property type="molecule type" value="mRNA"/>
</dbReference>
<dbReference type="EMBL" id="BT002296">
    <property type="protein sequence ID" value="AAN73293.1"/>
    <property type="molecule type" value="mRNA"/>
</dbReference>
<dbReference type="EMBL" id="AK222129">
    <property type="protein sequence ID" value="BAD95133.1"/>
    <property type="status" value="ALT_INIT"/>
    <property type="molecule type" value="mRNA"/>
</dbReference>
<dbReference type="RefSeq" id="NP_200333.2">
    <property type="nucleotide sequence ID" value="NM_124904.5"/>
</dbReference>
<dbReference type="SASBDB" id="Q8S9L5"/>
<dbReference type="SMR" id="Q8S9L5"/>
<dbReference type="BioGRID" id="20859">
    <property type="interactions" value="4"/>
</dbReference>
<dbReference type="FunCoup" id="Q8S9L5">
    <property type="interactions" value="985"/>
</dbReference>
<dbReference type="IntAct" id="Q8S9L5">
    <property type="interactions" value="5"/>
</dbReference>
<dbReference type="STRING" id="3702.Q8S9L5"/>
<dbReference type="iPTMnet" id="Q8S9L5"/>
<dbReference type="PaxDb" id="3702-AT5G55220.1"/>
<dbReference type="ProteomicsDB" id="246425"/>
<dbReference type="EnsemblPlants" id="AT5G55220.1">
    <property type="protein sequence ID" value="AT5G55220.1"/>
    <property type="gene ID" value="AT5G55220"/>
</dbReference>
<dbReference type="GeneID" id="835615"/>
<dbReference type="Gramene" id="AT5G55220.1">
    <property type="protein sequence ID" value="AT5G55220.1"/>
    <property type="gene ID" value="AT5G55220"/>
</dbReference>
<dbReference type="KEGG" id="ath:AT5G55220"/>
<dbReference type="Araport" id="AT5G55220"/>
<dbReference type="TAIR" id="AT5G55220">
    <property type="gene designation" value="TIG1"/>
</dbReference>
<dbReference type="eggNOG" id="ENOG502QUET">
    <property type="taxonomic scope" value="Eukaryota"/>
</dbReference>
<dbReference type="HOGENOM" id="CLU_033058_0_0_1"/>
<dbReference type="InParanoid" id="Q8S9L5"/>
<dbReference type="OMA" id="KGIKTQF"/>
<dbReference type="PhylomeDB" id="Q8S9L5"/>
<dbReference type="PRO" id="PR:Q8S9L5"/>
<dbReference type="Proteomes" id="UP000006548">
    <property type="component" value="Chromosome 5"/>
</dbReference>
<dbReference type="ExpressionAtlas" id="Q8S9L5">
    <property type="expression patterns" value="baseline and differential"/>
</dbReference>
<dbReference type="GO" id="GO:0009507">
    <property type="term" value="C:chloroplast"/>
    <property type="evidence" value="ECO:0007005"/>
    <property type="project" value="TAIR"/>
</dbReference>
<dbReference type="GO" id="GO:0009941">
    <property type="term" value="C:chloroplast envelope"/>
    <property type="evidence" value="ECO:0007005"/>
    <property type="project" value="TAIR"/>
</dbReference>
<dbReference type="GO" id="GO:0009570">
    <property type="term" value="C:chloroplast stroma"/>
    <property type="evidence" value="ECO:0007005"/>
    <property type="project" value="TAIR"/>
</dbReference>
<dbReference type="GO" id="GO:0009536">
    <property type="term" value="C:plastid"/>
    <property type="evidence" value="ECO:0007005"/>
    <property type="project" value="TAIR"/>
</dbReference>
<dbReference type="GO" id="GO:0003729">
    <property type="term" value="F:mRNA binding"/>
    <property type="evidence" value="ECO:0000314"/>
    <property type="project" value="TAIR"/>
</dbReference>
<dbReference type="GO" id="GO:0003755">
    <property type="term" value="F:peptidyl-prolyl cis-trans isomerase activity"/>
    <property type="evidence" value="ECO:0007669"/>
    <property type="project" value="UniProtKB-KW"/>
</dbReference>
<dbReference type="GO" id="GO:0006457">
    <property type="term" value="P:protein folding"/>
    <property type="evidence" value="ECO:0007669"/>
    <property type="project" value="InterPro"/>
</dbReference>
<dbReference type="GO" id="GO:0015031">
    <property type="term" value="P:protein transport"/>
    <property type="evidence" value="ECO:0007669"/>
    <property type="project" value="InterPro"/>
</dbReference>
<dbReference type="FunFam" id="1.10.3120.10:FF:000004">
    <property type="entry name" value="Chloroplast trigger factor"/>
    <property type="match status" value="1"/>
</dbReference>
<dbReference type="FunFam" id="3.10.50.40:FF:000001">
    <property type="entry name" value="Trigger factor"/>
    <property type="match status" value="1"/>
</dbReference>
<dbReference type="FunFam" id="3.30.70.1050:FF:000004">
    <property type="entry name" value="Trigger factor"/>
    <property type="match status" value="1"/>
</dbReference>
<dbReference type="Gene3D" id="3.10.50.40">
    <property type="match status" value="1"/>
</dbReference>
<dbReference type="Gene3D" id="3.30.70.1050">
    <property type="entry name" value="Trigger factor ribosome-binding domain"/>
    <property type="match status" value="1"/>
</dbReference>
<dbReference type="Gene3D" id="1.10.3120.10">
    <property type="entry name" value="Trigger factor, C-terminal domain"/>
    <property type="match status" value="1"/>
</dbReference>
<dbReference type="HAMAP" id="MF_00303">
    <property type="entry name" value="Trigger_factor_Tig"/>
    <property type="match status" value="1"/>
</dbReference>
<dbReference type="InterPro" id="IPR046357">
    <property type="entry name" value="PPIase_dom_sf"/>
</dbReference>
<dbReference type="InterPro" id="IPR001179">
    <property type="entry name" value="PPIase_FKBP_dom"/>
</dbReference>
<dbReference type="InterPro" id="IPR005215">
    <property type="entry name" value="Trig_fac"/>
</dbReference>
<dbReference type="InterPro" id="IPR008880">
    <property type="entry name" value="Trigger_fac_C"/>
</dbReference>
<dbReference type="InterPro" id="IPR037041">
    <property type="entry name" value="Trigger_fac_C_sf"/>
</dbReference>
<dbReference type="InterPro" id="IPR008881">
    <property type="entry name" value="Trigger_fac_ribosome-bd_bac"/>
</dbReference>
<dbReference type="InterPro" id="IPR036611">
    <property type="entry name" value="Trigger_fac_ribosome-bd_sf"/>
</dbReference>
<dbReference type="InterPro" id="IPR027304">
    <property type="entry name" value="Trigger_fact/SurA_dom_sf"/>
</dbReference>
<dbReference type="PANTHER" id="PTHR30560">
    <property type="entry name" value="TRIGGER FACTOR CHAPERONE AND PEPTIDYL-PROLYL CIS/TRANS ISOMERASE"/>
    <property type="match status" value="1"/>
</dbReference>
<dbReference type="PANTHER" id="PTHR30560:SF3">
    <property type="entry name" value="TRIGGER FACTOR-LIKE PROTEIN TIG, CHLOROPLASTIC"/>
    <property type="match status" value="1"/>
</dbReference>
<dbReference type="Pfam" id="PF05698">
    <property type="entry name" value="Trigger_C"/>
    <property type="match status" value="1"/>
</dbReference>
<dbReference type="Pfam" id="PF05697">
    <property type="entry name" value="Trigger_N"/>
    <property type="match status" value="1"/>
</dbReference>
<dbReference type="SUPFAM" id="SSF54534">
    <property type="entry name" value="FKBP-like"/>
    <property type="match status" value="1"/>
</dbReference>
<dbReference type="SUPFAM" id="SSF109998">
    <property type="entry name" value="Triger factor/SurA peptide-binding domain-like"/>
    <property type="match status" value="1"/>
</dbReference>
<dbReference type="SUPFAM" id="SSF102735">
    <property type="entry name" value="Trigger factor ribosome-binding domain"/>
    <property type="match status" value="1"/>
</dbReference>
<dbReference type="PROSITE" id="PS50059">
    <property type="entry name" value="FKBP_PPIASE"/>
    <property type="match status" value="1"/>
</dbReference>
<comment type="function">
    <text evidence="1">Involved in protein export. Acts as a chaperone by maintaining the newly synthesized protein in an open conformation. Functions as a peptidyl-prolyl cis-trans isomerase (By similarity).</text>
</comment>
<comment type="catalytic activity">
    <reaction>
        <text>[protein]-peptidylproline (omega=180) = [protein]-peptidylproline (omega=0)</text>
        <dbReference type="Rhea" id="RHEA:16237"/>
        <dbReference type="Rhea" id="RHEA-COMP:10747"/>
        <dbReference type="Rhea" id="RHEA-COMP:10748"/>
        <dbReference type="ChEBI" id="CHEBI:83833"/>
        <dbReference type="ChEBI" id="CHEBI:83834"/>
        <dbReference type="EC" id="5.2.1.8"/>
    </reaction>
</comment>
<comment type="subcellular location">
    <subcellularLocation>
        <location evidence="3">Plastid</location>
        <location evidence="3">Chloroplast</location>
    </subcellularLocation>
</comment>
<comment type="domain">
    <text evidence="1">Consists of 3 domains; the N-terminus binds the ribosome, the middle domain has PPIase activity, while the C-terminus has intrinsic chaperone activity on its own.</text>
</comment>
<comment type="similarity">
    <text evidence="3">Belongs to the FKBP-type PPIase family. Tig subfamily.</text>
</comment>
<comment type="sequence caution" evidence="3">
    <conflict type="erroneous gene model prediction">
        <sequence resource="EMBL-CDS" id="BAB08591"/>
    </conflict>
</comment>
<comment type="sequence caution" evidence="3">
    <conflict type="erroneous initiation">
        <sequence resource="EMBL-CDS" id="BAD95133"/>
    </conflict>
    <text>Truncated N-terminus.</text>
</comment>